<protein>
    <recommendedName>
        <fullName>Vacuolar-processing enzyme</fullName>
        <ecNumber>3.4.22.-</ecNumber>
    </recommendedName>
    <alternativeName>
        <fullName>Pv-VPE</fullName>
    </alternativeName>
</protein>
<evidence type="ECO:0000250" key="1"/>
<evidence type="ECO:0000250" key="2">
    <source>
        <dbReference type="UniProtKB" id="O89017"/>
    </source>
</evidence>
<evidence type="ECO:0000250" key="3">
    <source>
        <dbReference type="UniProtKB" id="P49046"/>
    </source>
</evidence>
<evidence type="ECO:0000250" key="4">
    <source>
        <dbReference type="UniProtKB" id="Q84LM2"/>
    </source>
</evidence>
<evidence type="ECO:0000255" key="5"/>
<evidence type="ECO:0000255" key="6">
    <source>
        <dbReference type="PROSITE-ProRule" id="PRU00498"/>
    </source>
</evidence>
<evidence type="ECO:0000269" key="7">
    <source>
    </source>
</evidence>
<evidence type="ECO:0000305" key="8"/>
<keyword id="KW-1015">Disulfide bond</keyword>
<keyword id="KW-0325">Glycoprotein</keyword>
<keyword id="KW-0378">Hydrolase</keyword>
<keyword id="KW-0645">Protease</keyword>
<keyword id="KW-0732">Signal</keyword>
<keyword id="KW-0788">Thiol protease</keyword>
<keyword id="KW-0865">Zymogen</keyword>
<reference key="1">
    <citation type="journal article" date="1998" name="Eur. J. Biochem.">
        <title>Does an asparaginyl-specific cysteine endopeptidase trigger phaseolin degradation in cotyledons of kidney bean seedlings?</title>
        <authorList>
            <person name="Senyuk V."/>
            <person name="Rotari V."/>
            <person name="Becker C."/>
            <person name="Zakharov A."/>
            <person name="Horstmann C."/>
            <person name="Muentz K."/>
            <person name="Vaintraub I."/>
        </authorList>
    </citation>
    <scope>NUCLEOTIDE SEQUENCE [GENOMIC DNA]</scope>
    <scope>DEVELOPMENTAL STAGE</scope>
    <source>
        <strain>cv. Moldavian</strain>
        <tissue>Cotyledon</tissue>
    </source>
</reference>
<proteinExistence type="evidence at transcript level"/>
<organism>
    <name type="scientific">Phaseolus vulgaris</name>
    <name type="common">Kidney bean</name>
    <name type="synonym">French bean</name>
    <dbReference type="NCBI Taxonomy" id="3885"/>
    <lineage>
        <taxon>Eukaryota</taxon>
        <taxon>Viridiplantae</taxon>
        <taxon>Streptophyta</taxon>
        <taxon>Embryophyta</taxon>
        <taxon>Tracheophyta</taxon>
        <taxon>Spermatophyta</taxon>
        <taxon>Magnoliopsida</taxon>
        <taxon>eudicotyledons</taxon>
        <taxon>Gunneridae</taxon>
        <taxon>Pentapetalae</taxon>
        <taxon>rosids</taxon>
        <taxon>fabids</taxon>
        <taxon>Fabales</taxon>
        <taxon>Fabaceae</taxon>
        <taxon>Papilionoideae</taxon>
        <taxon>50 kb inversion clade</taxon>
        <taxon>NPAAA clade</taxon>
        <taxon>indigoferoid/millettioid clade</taxon>
        <taxon>Phaseoleae</taxon>
        <taxon>Phaseolus</taxon>
    </lineage>
</organism>
<feature type="signal peptide" evidence="5">
    <location>
        <begin position="1"/>
        <end position="34"/>
    </location>
</feature>
<feature type="propeptide" id="PRO_0000026520" evidence="1">
    <location>
        <begin position="35"/>
        <end position="53"/>
    </location>
</feature>
<feature type="chain" id="PRO_0000026521" description="Vacuolar-processing enzyme">
    <location>
        <begin position="54"/>
        <end status="unknown"/>
    </location>
</feature>
<feature type="propeptide" id="PRO_0000026522" evidence="5">
    <location>
        <begin status="unknown"/>
        <end position="493"/>
    </location>
</feature>
<feature type="active site" evidence="2">
    <location>
        <position position="176"/>
    </location>
</feature>
<feature type="active site" description="Nucleophile" evidence="2">
    <location>
        <position position="218"/>
    </location>
</feature>
<feature type="site" description="Required for post-translational maturation and enzyme activity" evidence="4">
    <location>
        <position position="265"/>
    </location>
</feature>
<feature type="glycosylation site" description="N-linked (GlcNAc...) asparagine" evidence="6">
    <location>
        <position position="318"/>
    </location>
</feature>
<feature type="disulfide bond" evidence="3">
    <location>
        <begin position="251"/>
        <end position="265"/>
    </location>
</feature>
<feature type="disulfide bond" evidence="3">
    <location>
        <begin position="429"/>
        <end position="459"/>
    </location>
</feature>
<feature type="disulfide bond" evidence="3">
    <location>
        <begin position="441"/>
        <end position="476"/>
    </location>
</feature>
<accession>O24326</accession>
<dbReference type="EC" id="3.4.22.-"/>
<dbReference type="EMBL" id="Z99957">
    <property type="protein sequence ID" value="CAB17079.1"/>
    <property type="molecule type" value="Genomic_DNA"/>
</dbReference>
<dbReference type="PIR" id="T12044">
    <property type="entry name" value="T12044"/>
</dbReference>
<dbReference type="SMR" id="O24326"/>
<dbReference type="MEROPS" id="C13.001"/>
<dbReference type="eggNOG" id="KOG1348">
    <property type="taxonomic scope" value="Eukaryota"/>
</dbReference>
<dbReference type="GO" id="GO:0005773">
    <property type="term" value="C:vacuole"/>
    <property type="evidence" value="ECO:0007669"/>
    <property type="project" value="GOC"/>
</dbReference>
<dbReference type="GO" id="GO:0004197">
    <property type="term" value="F:cysteine-type endopeptidase activity"/>
    <property type="evidence" value="ECO:0007669"/>
    <property type="project" value="InterPro"/>
</dbReference>
<dbReference type="GO" id="GO:0051603">
    <property type="term" value="P:proteolysis involved in protein catabolic process"/>
    <property type="evidence" value="ECO:0007669"/>
    <property type="project" value="InterPro"/>
</dbReference>
<dbReference type="GO" id="GO:0006624">
    <property type="term" value="P:vacuolar protein processing"/>
    <property type="evidence" value="ECO:0007669"/>
    <property type="project" value="TreeGrafter"/>
</dbReference>
<dbReference type="CDD" id="cd21115">
    <property type="entry name" value="legumain_C"/>
    <property type="match status" value="1"/>
</dbReference>
<dbReference type="FunFam" id="1.10.132.130:FF:000001">
    <property type="entry name" value="Vacuolar-processing enzyme beta-isozyme"/>
    <property type="match status" value="1"/>
</dbReference>
<dbReference type="FunFam" id="3.40.50.1460:FF:000005">
    <property type="entry name" value="Vacuolar-processing enzyme beta-isozyme"/>
    <property type="match status" value="1"/>
</dbReference>
<dbReference type="Gene3D" id="1.10.132.130">
    <property type="match status" value="1"/>
</dbReference>
<dbReference type="Gene3D" id="3.40.50.1460">
    <property type="match status" value="1"/>
</dbReference>
<dbReference type="InterPro" id="IPR043577">
    <property type="entry name" value="AE"/>
</dbReference>
<dbReference type="InterPro" id="IPR048501">
    <property type="entry name" value="Legum_prodom"/>
</dbReference>
<dbReference type="InterPro" id="IPR046427">
    <property type="entry name" value="Legumain_prodom_sf"/>
</dbReference>
<dbReference type="InterPro" id="IPR001096">
    <property type="entry name" value="Peptidase_C13"/>
</dbReference>
<dbReference type="PANTHER" id="PTHR12000">
    <property type="entry name" value="HEMOGLOBINASE FAMILY MEMBER"/>
    <property type="match status" value="1"/>
</dbReference>
<dbReference type="PANTHER" id="PTHR12000:SF42">
    <property type="entry name" value="LEGUMAIN"/>
    <property type="match status" value="1"/>
</dbReference>
<dbReference type="Pfam" id="PF20985">
    <property type="entry name" value="Legum_prodom"/>
    <property type="match status" value="1"/>
</dbReference>
<dbReference type="Pfam" id="PF01650">
    <property type="entry name" value="Peptidase_C13"/>
    <property type="match status" value="1"/>
</dbReference>
<dbReference type="PIRSF" id="PIRSF500139">
    <property type="entry name" value="AE"/>
    <property type="match status" value="1"/>
</dbReference>
<dbReference type="PIRSF" id="PIRSF019663">
    <property type="entry name" value="Legumain"/>
    <property type="match status" value="1"/>
</dbReference>
<dbReference type="PRINTS" id="PR00776">
    <property type="entry name" value="HEMOGLOBNASE"/>
</dbReference>
<comment type="function">
    <text evidence="1">Asparagine-specific endopeptidase involved in the processing of vacuolar seed protein precursors into the mature forms.</text>
</comment>
<comment type="developmental stage">
    <text evidence="7">Not expressed in dormant seeds. First detected 1 day after imbibition, reaching a maximum at 3 days after imbibition, then declining gradually.</text>
</comment>
<comment type="similarity">
    <text evidence="8">Belongs to the peptidase C13 family.</text>
</comment>
<name>VPE2_PHAVU</name>
<sequence length="493" mass="55137">MAVHRSLLNKPTWCRVAFWWWMLVMVMRIQGTNGKEQDSVIKLPTQEVDAESDEVGTRWAVLVAGSNGYGNYRHQADVCHAYQLLIKGGVKEENIVVFMYDDIATHELNPRPGVIINNPQGPDVYAGVPKDYTGESVTSHNFFAVLLGDKSKVKGGSGKVINSKPEDRIFVYYSDHGGPGVLGMPNMPYLYAMDFIDVLKKKHASGGYKEMVIYVEACESGSIFEGIMPKDLNIYVTTASNAQENSWGTYCPGMYPPPPPEYITCLGDLYSVAWMEDSESHNLKKESVEQQYQSVKQRTSNFEAYAMGSHVMQYGDANMTAEKLYLYHGFDPATVNFPPHNGRLKSKMEVVNQRDAELLFMWQVYQRSNHLPEKKTDILKQIEEIVKHRKHLDGSVELIGVLLYGPEKASSVLRSVRTTGLPLVDDWTCLKSMVRVYETHCGSLTQYGMKHMRAFANICNSGVSETSMEKACVAACGGYHAGLLHPSNTGYSA</sequence>